<comment type="function">
    <text evidence="1">Self-assembles to form an icosahedral capsid with a T=16 symmetry, about 200 nm in diameter, and consisting of 150 hexons and 12 pentons (total of 162 capsomers). Hexons form the edges and faces of the capsid and are each composed of six MCP molecules. In contrast, one penton is found at each of the 12 vertices. Eleven of the pentons are MCP pentamers, while the last vertex is occupied by the portal complex. The capsid is surrounded by a layer of proteinaceous material designated the tegument which, in turn, is enclosed in an envelope of host cell-derived lipids containing virus-encoded glycoproteins.</text>
</comment>
<comment type="subunit">
    <text evidence="1">Homomultimer. Makes the hexons and eleven out of twelve pentons. Interacts with triplex proteins 1/TRX1 and 2/TRX2; adjacent capsomers are linked together in groups of three by triplexes, heterotrimeric complexes composed of one molecule of TRX1 and two molecules of TRX2. Interacts with scaffold protein; this interaction allows efficient MCP transport to the host nucleus. Interacts with capsid vertex component 2/CVC2. Interacts with the small capsomere-interacting protein/SCP.</text>
</comment>
<comment type="subcellular location">
    <subcellularLocation>
        <location evidence="1">Virion</location>
    </subcellularLocation>
    <subcellularLocation>
        <location evidence="1">Host nucleus</location>
    </subcellularLocation>
</comment>
<comment type="similarity">
    <text evidence="1">Belongs to the herpesviridae major capsid protein family.</text>
</comment>
<reference key="1">
    <citation type="journal article" date="1999" name="J. Virol.">
        <title>Human herpesvirus 6B genome sequence: coding content and comparison with human herpesvirus 6A.</title>
        <authorList>
            <person name="Dominguez G."/>
            <person name="Dambaugh T.R."/>
            <person name="Stamey F.R."/>
            <person name="Dewhurst S."/>
            <person name="Inoue N."/>
            <person name="Pellett P.E."/>
        </authorList>
    </citation>
    <scope>NUCLEOTIDE SEQUENCE [LARGE SCALE GENOMIC DNA]</scope>
    <source>
        <strain>Z29</strain>
    </source>
</reference>
<dbReference type="EMBL" id="AF157706">
    <property type="protein sequence ID" value="AAD49660.1"/>
    <property type="molecule type" value="Genomic_DNA"/>
</dbReference>
<dbReference type="RefSeq" id="NP_050238.1">
    <property type="nucleotide sequence ID" value="NC_000898.1"/>
</dbReference>
<dbReference type="PDB" id="6Q1F">
    <property type="method" value="EM"/>
    <property type="resolution" value="9.00 A"/>
    <property type="chains" value="A/B/C/D/E/F/G/H/I/q/r/s/t/u/v/w=1-1345"/>
</dbReference>
<dbReference type="PDBsum" id="6Q1F"/>
<dbReference type="EMDB" id="EMD-20557"/>
<dbReference type="SMR" id="Q9QJ26"/>
<dbReference type="GeneID" id="1497059"/>
<dbReference type="KEGG" id="vg:1497059"/>
<dbReference type="Proteomes" id="UP000006930">
    <property type="component" value="Segment"/>
</dbReference>
<dbReference type="GO" id="GO:0042025">
    <property type="term" value="C:host cell nucleus"/>
    <property type="evidence" value="ECO:0007669"/>
    <property type="project" value="UniProtKB-SubCell"/>
</dbReference>
<dbReference type="GO" id="GO:0039622">
    <property type="term" value="C:T=16 icosahedral viral capsid"/>
    <property type="evidence" value="ECO:0007669"/>
    <property type="project" value="UniProtKB-KW"/>
</dbReference>
<dbReference type="GO" id="GO:0005198">
    <property type="term" value="F:structural molecule activity"/>
    <property type="evidence" value="ECO:0007669"/>
    <property type="project" value="InterPro"/>
</dbReference>
<dbReference type="HAMAP" id="MF_04016">
    <property type="entry name" value="HSV_MCP"/>
    <property type="match status" value="1"/>
</dbReference>
<dbReference type="InterPro" id="IPR000912">
    <property type="entry name" value="Herpes_MCP"/>
</dbReference>
<dbReference type="InterPro" id="IPR023233">
    <property type="entry name" value="Herpes_MCP_upper_sf"/>
</dbReference>
<dbReference type="Pfam" id="PF03122">
    <property type="entry name" value="Herpes_MCP"/>
    <property type="match status" value="1"/>
</dbReference>
<dbReference type="PRINTS" id="PR00235">
    <property type="entry name" value="HSVCAPSIDMCP"/>
</dbReference>
<dbReference type="SUPFAM" id="SSF103417">
    <property type="entry name" value="Major capsid protein VP5"/>
    <property type="match status" value="1"/>
</dbReference>
<protein>
    <recommendedName>
        <fullName evidence="1">Major capsid protein</fullName>
        <shortName evidence="1">MCP</shortName>
    </recommendedName>
</protein>
<feature type="chain" id="PRO_0000408407" description="Major capsid protein">
    <location>
        <begin position="1"/>
        <end position="1345"/>
    </location>
</feature>
<evidence type="ECO:0000255" key="1">
    <source>
        <dbReference type="HAMAP-Rule" id="MF_04016"/>
    </source>
</evidence>
<gene>
    <name evidence="1" type="primary">MCP</name>
    <name type="synonym">U57</name>
</gene>
<sequence>MENWQATEILPKIEAPLNIFNDIKTYTAEQLFDNLRIYFGDDPSRYNISFEALLGIYCNKIEWINFFTTPIAVAANVIRFNDVSRMTLGKVLFFIQLPRVATGNDVTAPKETTIMVAKHSEKHPINISFDLSAACLEHLENTFKNTVIDQILNINALHTVLRSLKNSADSLERGLIHAFMQTLLRKSPPQFIVLTMNENKVHNKQALSRVQRSNMFQSLKNRLLTSLFFLNRNNNSSYIYRILNDMMESVTESILNDTNNYTSKENIPLDGVLLGPIGSIQKLTNILSQYISTQVVSAPISYGHFIMGKENAVTAIAYRAIMADFTQFTVNAGTEQQDTNNKSEIFDKSRAYADLKLNTLKLGDKLVAFDHLHKVYKNTDVNDPLEQSLQLTFFFPLGIYIPTETGFSTMETRVKLNDTMENNLPTSVFFHNKDQVVQRIDFADILPSVCHPIVHDSTIVERLMKNEPLPTGHRFSQLCQLKITRENPTRILQTLYNLYESRQEVPKNTNVLKNELNVEDFYKPDNPTLPTERHPFFDLTYIQKNRATEVLCTPRIMIGNMPLPLAPISFHEARTNQMLEHAKTNSHNYDFTLKIVTESLTSGSYPELAYVIEILVHGNKHAFMILKQVISQCISYWFNMKHILLFCNSFEMIMLISNHMGDELIPGAAFAHYRNLVSLIRLVKRTISISNINEQLCGEPLVNFANALFDGRLFCPFVHTMPRNDTNAKITADDTPLTQNTVRVRNYEISDVQRMNLIDSSVVFTDNDRPSNENTILSKIFYFCVLPALSNNKACGAGVNVKELVLDLFYTEPFICPDDCFQENPISSDVLMSLIREAMGPGYTVANTSSIAKQLFKSLIYINENTKILEVEVSLDPAQRHGNSVHFQSLQHILYNGLCLISPITTLRRYYQPIPFHRFFSDPGICGTMNADIQVFLNTFPHYQRNDGGFPLPPPLALEFYNWQRTPFSVYSAFCPNSLLSIMTLAAMHSKLSPVAIAIQSKSKIHPGFAATLVRTDNFDVECLLYSSRAATSIILDDPTVTAEAKDIVTTYNFTQHLSFVDMGLGFSSTTATANLKRIKSDMGSKIQNLFSAFPIHAFTNTDINTWIRHHVGIEKPNPSEGEALNIITFGGINKNPPSILLHGQQAICEVILTPVTTNINFFKLPHNPRGRESCMMGTDPHNEEAARKALYDHTQTDSDTFAATTNPWASLPGSLGDILYNTAHREQLCYNPKTYSPNAQFFTESDILKTNKMMYKVINEYCMKSNSCLNSDSEIQYSCSEGTDSFVSRPCQFLQNALPLHCSSNQALLESRSKTGNTQISETHYCNYAIGETIPLQLIIESSI</sequence>
<name>MCP_HHV6Z</name>
<organismHost>
    <name type="scientific">Homo sapiens</name>
    <name type="common">Human</name>
    <dbReference type="NCBI Taxonomy" id="9606"/>
</organismHost>
<accession>Q9QJ26</accession>
<proteinExistence type="evidence at protein level"/>
<keyword id="KW-0002">3D-structure</keyword>
<keyword id="KW-0167">Capsid protein</keyword>
<keyword id="KW-1048">Host nucleus</keyword>
<keyword id="KW-1185">Reference proteome</keyword>
<keyword id="KW-1147">T=16 icosahedral capsid protein</keyword>
<keyword id="KW-0946">Virion</keyword>
<organism>
    <name type="scientific">Human herpesvirus 6B (strain Z29)</name>
    <name type="common">HHV-6 variant B</name>
    <name type="synonym">Human B lymphotropic virus</name>
    <dbReference type="NCBI Taxonomy" id="36351"/>
    <lineage>
        <taxon>Viruses</taxon>
        <taxon>Duplodnaviria</taxon>
        <taxon>Heunggongvirae</taxon>
        <taxon>Peploviricota</taxon>
        <taxon>Herviviricetes</taxon>
        <taxon>Herpesvirales</taxon>
        <taxon>Orthoherpesviridae</taxon>
        <taxon>Betaherpesvirinae</taxon>
        <taxon>Roseolovirus</taxon>
        <taxon>Roseolovirus humanbeta6b</taxon>
        <taxon>Human herpesvirus 6B</taxon>
    </lineage>
</organism>